<keyword id="KW-0067">ATP-binding</keyword>
<keyword id="KW-1003">Cell membrane</keyword>
<keyword id="KW-0472">Membrane</keyword>
<keyword id="KW-0547">Nucleotide-binding</keyword>
<keyword id="KW-0592">Phosphate transport</keyword>
<keyword id="KW-1278">Translocase</keyword>
<keyword id="KW-0813">Transport</keyword>
<gene>
    <name evidence="1" type="primary">pstB</name>
    <name type="ordered locus">CPF_0621</name>
</gene>
<evidence type="ECO:0000255" key="1">
    <source>
        <dbReference type="HAMAP-Rule" id="MF_01702"/>
    </source>
</evidence>
<feature type="chain" id="PRO_0000272439" description="Phosphate import ATP-binding protein PstB">
    <location>
        <begin position="1"/>
        <end position="253"/>
    </location>
</feature>
<feature type="domain" description="ABC transporter" evidence="1">
    <location>
        <begin position="8"/>
        <end position="248"/>
    </location>
</feature>
<feature type="binding site" evidence="1">
    <location>
        <begin position="40"/>
        <end position="47"/>
    </location>
    <ligand>
        <name>ATP</name>
        <dbReference type="ChEBI" id="CHEBI:30616"/>
    </ligand>
</feature>
<proteinExistence type="inferred from homology"/>
<protein>
    <recommendedName>
        <fullName evidence="1">Phosphate import ATP-binding protein PstB</fullName>
        <ecNumber evidence="1">7.3.2.1</ecNumber>
    </recommendedName>
    <alternativeName>
        <fullName evidence="1">ABC phosphate transporter</fullName>
    </alternativeName>
    <alternativeName>
        <fullName evidence="1">Phosphate-transporting ATPase</fullName>
    </alternativeName>
</protein>
<organism>
    <name type="scientific">Clostridium perfringens (strain ATCC 13124 / DSM 756 / JCM 1290 / NCIMB 6125 / NCTC 8237 / Type A)</name>
    <dbReference type="NCBI Taxonomy" id="195103"/>
    <lineage>
        <taxon>Bacteria</taxon>
        <taxon>Bacillati</taxon>
        <taxon>Bacillota</taxon>
        <taxon>Clostridia</taxon>
        <taxon>Eubacteriales</taxon>
        <taxon>Clostridiaceae</taxon>
        <taxon>Clostridium</taxon>
    </lineage>
</organism>
<reference key="1">
    <citation type="journal article" date="2006" name="Genome Res.">
        <title>Skewed genomic variability in strains of the toxigenic bacterial pathogen, Clostridium perfringens.</title>
        <authorList>
            <person name="Myers G.S.A."/>
            <person name="Rasko D.A."/>
            <person name="Cheung J.K."/>
            <person name="Ravel J."/>
            <person name="Seshadri R."/>
            <person name="DeBoy R.T."/>
            <person name="Ren Q."/>
            <person name="Varga J."/>
            <person name="Awad M.M."/>
            <person name="Brinkac L.M."/>
            <person name="Daugherty S.C."/>
            <person name="Haft D.H."/>
            <person name="Dodson R.J."/>
            <person name="Madupu R."/>
            <person name="Nelson W.C."/>
            <person name="Rosovitz M.J."/>
            <person name="Sullivan S.A."/>
            <person name="Khouri H."/>
            <person name="Dimitrov G.I."/>
            <person name="Watkins K.L."/>
            <person name="Mulligan S."/>
            <person name="Benton J."/>
            <person name="Radune D."/>
            <person name="Fisher D.J."/>
            <person name="Atkins H.S."/>
            <person name="Hiscox T."/>
            <person name="Jost B.H."/>
            <person name="Billington S.J."/>
            <person name="Songer J.G."/>
            <person name="McClane B.A."/>
            <person name="Titball R.W."/>
            <person name="Rood J.I."/>
            <person name="Melville S.B."/>
            <person name="Paulsen I.T."/>
        </authorList>
    </citation>
    <scope>NUCLEOTIDE SEQUENCE [LARGE SCALE GENOMIC DNA]</scope>
    <source>
        <strain>ATCC 13124 / DSM 756 / JCM 1290 / NCIMB 6125 / NCTC 8237 / S 107 / Type A</strain>
    </source>
</reference>
<name>PSTB_CLOP1</name>
<accession>Q0TTG6</accession>
<dbReference type="EC" id="7.3.2.1" evidence="1"/>
<dbReference type="EMBL" id="CP000246">
    <property type="protein sequence ID" value="ABG84192.1"/>
    <property type="molecule type" value="Genomic_DNA"/>
</dbReference>
<dbReference type="RefSeq" id="WP_003453508.1">
    <property type="nucleotide sequence ID" value="NC_008261.1"/>
</dbReference>
<dbReference type="SMR" id="Q0TTG6"/>
<dbReference type="STRING" id="195103.CPF_0621"/>
<dbReference type="PaxDb" id="195103-CPF_0621"/>
<dbReference type="GeneID" id="93003035"/>
<dbReference type="KEGG" id="cpf:CPF_0621"/>
<dbReference type="eggNOG" id="COG1117">
    <property type="taxonomic scope" value="Bacteria"/>
</dbReference>
<dbReference type="HOGENOM" id="CLU_000604_1_22_9"/>
<dbReference type="Proteomes" id="UP000001823">
    <property type="component" value="Chromosome"/>
</dbReference>
<dbReference type="GO" id="GO:0005886">
    <property type="term" value="C:plasma membrane"/>
    <property type="evidence" value="ECO:0007669"/>
    <property type="project" value="UniProtKB-SubCell"/>
</dbReference>
<dbReference type="GO" id="GO:0005524">
    <property type="term" value="F:ATP binding"/>
    <property type="evidence" value="ECO:0007669"/>
    <property type="project" value="UniProtKB-KW"/>
</dbReference>
<dbReference type="GO" id="GO:0016887">
    <property type="term" value="F:ATP hydrolysis activity"/>
    <property type="evidence" value="ECO:0007669"/>
    <property type="project" value="InterPro"/>
</dbReference>
<dbReference type="GO" id="GO:0015415">
    <property type="term" value="F:ATPase-coupled phosphate ion transmembrane transporter activity"/>
    <property type="evidence" value="ECO:0007669"/>
    <property type="project" value="UniProtKB-EC"/>
</dbReference>
<dbReference type="GO" id="GO:0035435">
    <property type="term" value="P:phosphate ion transmembrane transport"/>
    <property type="evidence" value="ECO:0007669"/>
    <property type="project" value="InterPro"/>
</dbReference>
<dbReference type="CDD" id="cd03260">
    <property type="entry name" value="ABC_PstB_phosphate_transporter"/>
    <property type="match status" value="1"/>
</dbReference>
<dbReference type="FunFam" id="3.40.50.300:FF:000132">
    <property type="entry name" value="Phosphate import ATP-binding protein PstB"/>
    <property type="match status" value="1"/>
</dbReference>
<dbReference type="Gene3D" id="3.40.50.300">
    <property type="entry name" value="P-loop containing nucleotide triphosphate hydrolases"/>
    <property type="match status" value="1"/>
</dbReference>
<dbReference type="InterPro" id="IPR003593">
    <property type="entry name" value="AAA+_ATPase"/>
</dbReference>
<dbReference type="InterPro" id="IPR003439">
    <property type="entry name" value="ABC_transporter-like_ATP-bd"/>
</dbReference>
<dbReference type="InterPro" id="IPR017871">
    <property type="entry name" value="ABC_transporter-like_CS"/>
</dbReference>
<dbReference type="InterPro" id="IPR027417">
    <property type="entry name" value="P-loop_NTPase"/>
</dbReference>
<dbReference type="InterPro" id="IPR005670">
    <property type="entry name" value="PstB-like"/>
</dbReference>
<dbReference type="NCBIfam" id="TIGR00972">
    <property type="entry name" value="3a0107s01c2"/>
    <property type="match status" value="1"/>
</dbReference>
<dbReference type="PANTHER" id="PTHR43423">
    <property type="entry name" value="ABC TRANSPORTER I FAMILY MEMBER 17"/>
    <property type="match status" value="1"/>
</dbReference>
<dbReference type="PANTHER" id="PTHR43423:SF1">
    <property type="entry name" value="ABC TRANSPORTER I FAMILY MEMBER 17"/>
    <property type="match status" value="1"/>
</dbReference>
<dbReference type="Pfam" id="PF00005">
    <property type="entry name" value="ABC_tran"/>
    <property type="match status" value="1"/>
</dbReference>
<dbReference type="SMART" id="SM00382">
    <property type="entry name" value="AAA"/>
    <property type="match status" value="1"/>
</dbReference>
<dbReference type="SUPFAM" id="SSF52540">
    <property type="entry name" value="P-loop containing nucleoside triphosphate hydrolases"/>
    <property type="match status" value="1"/>
</dbReference>
<dbReference type="PROSITE" id="PS00211">
    <property type="entry name" value="ABC_TRANSPORTER_1"/>
    <property type="match status" value="1"/>
</dbReference>
<dbReference type="PROSITE" id="PS50893">
    <property type="entry name" value="ABC_TRANSPORTER_2"/>
    <property type="match status" value="1"/>
</dbReference>
<dbReference type="PROSITE" id="PS51238">
    <property type="entry name" value="PSTB"/>
    <property type="match status" value="1"/>
</dbReference>
<sequence>MSDKKTKIQVRDLDLFYASNHALKKINIDIKENEVTALIGPSGCGKSTFLRTLNRMNDLIPIVRIEGEIQVDGKDIYKDDDVIALRTKVGMVFQKPNLFPMSIYDNVAYGPRVHGIKDKKVLDKIVEESLRDAAIWDEVKNRLKSSALGLSGGQQQRICIARAIAMNPEIILMDEPTSALDPISTLKVEELIRKLEDKYTIVIVTHNMQQAARISDKTAFFLNGELVEFSDTNTIFTNPRDKRTEDYITGRFG</sequence>
<comment type="function">
    <text evidence="1">Part of the ABC transporter complex PstSACB involved in phosphate import. Responsible for energy coupling to the transport system.</text>
</comment>
<comment type="catalytic activity">
    <reaction evidence="1">
        <text>phosphate(out) + ATP + H2O = ADP + 2 phosphate(in) + H(+)</text>
        <dbReference type="Rhea" id="RHEA:24440"/>
        <dbReference type="ChEBI" id="CHEBI:15377"/>
        <dbReference type="ChEBI" id="CHEBI:15378"/>
        <dbReference type="ChEBI" id="CHEBI:30616"/>
        <dbReference type="ChEBI" id="CHEBI:43474"/>
        <dbReference type="ChEBI" id="CHEBI:456216"/>
        <dbReference type="EC" id="7.3.2.1"/>
    </reaction>
</comment>
<comment type="subunit">
    <text evidence="1">The complex is composed of two ATP-binding proteins (PstB), two transmembrane proteins (PstC and PstA) and a solute-binding protein (PstS).</text>
</comment>
<comment type="subcellular location">
    <subcellularLocation>
        <location evidence="1">Cell membrane</location>
        <topology evidence="1">Peripheral membrane protein</topology>
    </subcellularLocation>
</comment>
<comment type="similarity">
    <text evidence="1">Belongs to the ABC transporter superfamily. Phosphate importer (TC 3.A.1.7) family.</text>
</comment>